<sequence length="201" mass="21792">MSVYSPRLRELVEGLRRLPGVGAKTAQRMALHLLQRDRDGARQLADALQRAVDGVGHCPECGLLTEEERCGLCASPQRRRTLLCVVESSADVFALEQATDFQGLYFVLGGALSPLDGIGPEELGLDRLQQRLEAGEVEEIILATNPTIEGEATAHYVQSLAAERGVRTTRIAHGVPMGGALEQVDQGTLSHAFMGRRDYEG</sequence>
<evidence type="ECO:0000255" key="1">
    <source>
        <dbReference type="HAMAP-Rule" id="MF_00017"/>
    </source>
</evidence>
<feature type="chain" id="PRO_0000322896" description="Recombination protein RecR">
    <location>
        <begin position="1"/>
        <end position="201"/>
    </location>
</feature>
<feature type="domain" description="Toprim" evidence="1">
    <location>
        <begin position="81"/>
        <end position="176"/>
    </location>
</feature>
<feature type="zinc finger region" description="C4-type" evidence="1">
    <location>
        <begin position="58"/>
        <end position="73"/>
    </location>
</feature>
<dbReference type="EMBL" id="CP000544">
    <property type="protein sequence ID" value="ABM61024.1"/>
    <property type="molecule type" value="Genomic_DNA"/>
</dbReference>
<dbReference type="RefSeq" id="WP_011813047.1">
    <property type="nucleotide sequence ID" value="NC_008789.1"/>
</dbReference>
<dbReference type="SMR" id="A1WTL2"/>
<dbReference type="STRING" id="349124.Hhal_0230"/>
<dbReference type="KEGG" id="hha:Hhal_0230"/>
<dbReference type="eggNOG" id="COG0353">
    <property type="taxonomic scope" value="Bacteria"/>
</dbReference>
<dbReference type="HOGENOM" id="CLU_060739_1_2_6"/>
<dbReference type="OrthoDB" id="9802672at2"/>
<dbReference type="Proteomes" id="UP000000647">
    <property type="component" value="Chromosome"/>
</dbReference>
<dbReference type="GO" id="GO:0003677">
    <property type="term" value="F:DNA binding"/>
    <property type="evidence" value="ECO:0007669"/>
    <property type="project" value="UniProtKB-UniRule"/>
</dbReference>
<dbReference type="GO" id="GO:0008270">
    <property type="term" value="F:zinc ion binding"/>
    <property type="evidence" value="ECO:0007669"/>
    <property type="project" value="UniProtKB-KW"/>
</dbReference>
<dbReference type="GO" id="GO:0006310">
    <property type="term" value="P:DNA recombination"/>
    <property type="evidence" value="ECO:0007669"/>
    <property type="project" value="UniProtKB-UniRule"/>
</dbReference>
<dbReference type="GO" id="GO:0006281">
    <property type="term" value="P:DNA repair"/>
    <property type="evidence" value="ECO:0007669"/>
    <property type="project" value="UniProtKB-UniRule"/>
</dbReference>
<dbReference type="CDD" id="cd01025">
    <property type="entry name" value="TOPRIM_recR"/>
    <property type="match status" value="1"/>
</dbReference>
<dbReference type="Gene3D" id="3.40.1360.10">
    <property type="match status" value="1"/>
</dbReference>
<dbReference type="Gene3D" id="6.10.250.240">
    <property type="match status" value="1"/>
</dbReference>
<dbReference type="Gene3D" id="1.10.8.420">
    <property type="entry name" value="RecR Domain 1"/>
    <property type="match status" value="1"/>
</dbReference>
<dbReference type="HAMAP" id="MF_00017">
    <property type="entry name" value="RecR"/>
    <property type="match status" value="1"/>
</dbReference>
<dbReference type="InterPro" id="IPR000093">
    <property type="entry name" value="DNA_Rcmb_RecR"/>
</dbReference>
<dbReference type="InterPro" id="IPR023627">
    <property type="entry name" value="Rcmb_RecR"/>
</dbReference>
<dbReference type="InterPro" id="IPR015967">
    <property type="entry name" value="Rcmb_RecR_Znf"/>
</dbReference>
<dbReference type="InterPro" id="IPR006171">
    <property type="entry name" value="TOPRIM_dom"/>
</dbReference>
<dbReference type="InterPro" id="IPR034137">
    <property type="entry name" value="TOPRIM_RecR"/>
</dbReference>
<dbReference type="NCBIfam" id="TIGR00615">
    <property type="entry name" value="recR"/>
    <property type="match status" value="1"/>
</dbReference>
<dbReference type="PANTHER" id="PTHR30446">
    <property type="entry name" value="RECOMBINATION PROTEIN RECR"/>
    <property type="match status" value="1"/>
</dbReference>
<dbReference type="PANTHER" id="PTHR30446:SF0">
    <property type="entry name" value="RECOMBINATION PROTEIN RECR"/>
    <property type="match status" value="1"/>
</dbReference>
<dbReference type="Pfam" id="PF21175">
    <property type="entry name" value="RecR_C"/>
    <property type="match status" value="1"/>
</dbReference>
<dbReference type="Pfam" id="PF21176">
    <property type="entry name" value="RecR_HhH"/>
    <property type="match status" value="1"/>
</dbReference>
<dbReference type="Pfam" id="PF02132">
    <property type="entry name" value="RecR_ZnF"/>
    <property type="match status" value="1"/>
</dbReference>
<dbReference type="Pfam" id="PF13662">
    <property type="entry name" value="Toprim_4"/>
    <property type="match status" value="1"/>
</dbReference>
<dbReference type="SMART" id="SM00493">
    <property type="entry name" value="TOPRIM"/>
    <property type="match status" value="1"/>
</dbReference>
<dbReference type="SUPFAM" id="SSF111304">
    <property type="entry name" value="Recombination protein RecR"/>
    <property type="match status" value="1"/>
</dbReference>
<dbReference type="PROSITE" id="PS50880">
    <property type="entry name" value="TOPRIM"/>
    <property type="match status" value="1"/>
</dbReference>
<accession>A1WTL2</accession>
<comment type="function">
    <text evidence="1">May play a role in DNA repair. It seems to be involved in an RecBC-independent recombinational process of DNA repair. It may act with RecF and RecO.</text>
</comment>
<comment type="similarity">
    <text evidence="1">Belongs to the RecR family.</text>
</comment>
<gene>
    <name evidence="1" type="primary">recR</name>
    <name type="ordered locus">Hhal_0230</name>
</gene>
<keyword id="KW-0227">DNA damage</keyword>
<keyword id="KW-0233">DNA recombination</keyword>
<keyword id="KW-0234">DNA repair</keyword>
<keyword id="KW-0479">Metal-binding</keyword>
<keyword id="KW-1185">Reference proteome</keyword>
<keyword id="KW-0862">Zinc</keyword>
<keyword id="KW-0863">Zinc-finger</keyword>
<reference key="1">
    <citation type="submission" date="2006-12" db="EMBL/GenBank/DDBJ databases">
        <title>Complete sequence of Halorhodospira halophila SL1.</title>
        <authorList>
            <consortium name="US DOE Joint Genome Institute"/>
            <person name="Copeland A."/>
            <person name="Lucas S."/>
            <person name="Lapidus A."/>
            <person name="Barry K."/>
            <person name="Detter J.C."/>
            <person name="Glavina del Rio T."/>
            <person name="Hammon N."/>
            <person name="Israni S."/>
            <person name="Dalin E."/>
            <person name="Tice H."/>
            <person name="Pitluck S."/>
            <person name="Saunders E."/>
            <person name="Brettin T."/>
            <person name="Bruce D."/>
            <person name="Han C."/>
            <person name="Tapia R."/>
            <person name="Schmutz J."/>
            <person name="Larimer F."/>
            <person name="Land M."/>
            <person name="Hauser L."/>
            <person name="Kyrpides N."/>
            <person name="Mikhailova N."/>
            <person name="Hoff W."/>
            <person name="Richardson P."/>
        </authorList>
    </citation>
    <scope>NUCLEOTIDE SEQUENCE [LARGE SCALE GENOMIC DNA]</scope>
    <source>
        <strain>DSM 244 / SL1</strain>
    </source>
</reference>
<protein>
    <recommendedName>
        <fullName evidence="1">Recombination protein RecR</fullName>
    </recommendedName>
</protein>
<name>RECR_HALHL</name>
<organism>
    <name type="scientific">Halorhodospira halophila (strain DSM 244 / SL1)</name>
    <name type="common">Ectothiorhodospira halophila (strain DSM 244 / SL1)</name>
    <dbReference type="NCBI Taxonomy" id="349124"/>
    <lineage>
        <taxon>Bacteria</taxon>
        <taxon>Pseudomonadati</taxon>
        <taxon>Pseudomonadota</taxon>
        <taxon>Gammaproteobacteria</taxon>
        <taxon>Chromatiales</taxon>
        <taxon>Ectothiorhodospiraceae</taxon>
        <taxon>Halorhodospira</taxon>
    </lineage>
</organism>
<proteinExistence type="inferred from homology"/>